<keyword id="KW-0004">4Fe-4S</keyword>
<keyword id="KW-0408">Iron</keyword>
<keyword id="KW-0411">Iron-sulfur</keyword>
<keyword id="KW-0479">Metal-binding</keyword>
<reference key="1">
    <citation type="journal article" date="2007" name="Genome Biol.">
        <title>Characterization and modeling of the Haemophilus influenzae core and supragenomes based on the complete genomic sequences of Rd and 12 clinical nontypeable strains.</title>
        <authorList>
            <person name="Hogg J.S."/>
            <person name="Hu F.Z."/>
            <person name="Janto B."/>
            <person name="Boissy R."/>
            <person name="Hayes J."/>
            <person name="Keefe R."/>
            <person name="Post J.C."/>
            <person name="Ehrlich G.D."/>
        </authorList>
    </citation>
    <scope>NUCLEOTIDE SEQUENCE [LARGE SCALE GENOMIC DNA]</scope>
    <source>
        <strain>PittGG</strain>
    </source>
</reference>
<feature type="chain" id="PRO_1000069872" description="Fe/S biogenesis protein NfuA">
    <location>
        <begin position="1"/>
        <end position="198"/>
    </location>
</feature>
<feature type="binding site" evidence="1">
    <location>
        <position position="155"/>
    </location>
    <ligand>
        <name>[4Fe-4S] cluster</name>
        <dbReference type="ChEBI" id="CHEBI:49883"/>
    </ligand>
</feature>
<feature type="binding site" evidence="1">
    <location>
        <position position="158"/>
    </location>
    <ligand>
        <name>[4Fe-4S] cluster</name>
        <dbReference type="ChEBI" id="CHEBI:49883"/>
    </ligand>
</feature>
<name>NFUA_HAEIG</name>
<gene>
    <name evidence="1" type="primary">nfuA</name>
    <name type="ordered locus">CGSHiGG_05385</name>
</gene>
<dbReference type="EMBL" id="CP000672">
    <property type="protein sequence ID" value="ABQ99999.1"/>
    <property type="molecule type" value="Genomic_DNA"/>
</dbReference>
<dbReference type="SMR" id="A5UGU4"/>
<dbReference type="KEGG" id="hiq:CGSHiGG_05385"/>
<dbReference type="HOGENOM" id="CLU_094569_0_0_6"/>
<dbReference type="Proteomes" id="UP000001990">
    <property type="component" value="Chromosome"/>
</dbReference>
<dbReference type="GO" id="GO:0051539">
    <property type="term" value="F:4 iron, 4 sulfur cluster binding"/>
    <property type="evidence" value="ECO:0007669"/>
    <property type="project" value="UniProtKB-UniRule"/>
</dbReference>
<dbReference type="GO" id="GO:0005506">
    <property type="term" value="F:iron ion binding"/>
    <property type="evidence" value="ECO:0007669"/>
    <property type="project" value="InterPro"/>
</dbReference>
<dbReference type="GO" id="GO:0016226">
    <property type="term" value="P:iron-sulfur cluster assembly"/>
    <property type="evidence" value="ECO:0007669"/>
    <property type="project" value="UniProtKB-UniRule"/>
</dbReference>
<dbReference type="GO" id="GO:0051604">
    <property type="term" value="P:protein maturation"/>
    <property type="evidence" value="ECO:0007669"/>
    <property type="project" value="UniProtKB-UniRule"/>
</dbReference>
<dbReference type="Gene3D" id="3.30.300.130">
    <property type="entry name" value="Fe-S cluster assembly (FSCA)"/>
    <property type="match status" value="1"/>
</dbReference>
<dbReference type="Gene3D" id="2.60.300.12">
    <property type="entry name" value="HesB-like domain"/>
    <property type="match status" value="1"/>
</dbReference>
<dbReference type="HAMAP" id="MF_01637">
    <property type="entry name" value="Fe_S_biogen_NfuA"/>
    <property type="match status" value="1"/>
</dbReference>
<dbReference type="InterPro" id="IPR017726">
    <property type="entry name" value="Fe/S_biogenesis_protein_NfuA"/>
</dbReference>
<dbReference type="InterPro" id="IPR000361">
    <property type="entry name" value="FeS_biogenesis"/>
</dbReference>
<dbReference type="InterPro" id="IPR034904">
    <property type="entry name" value="FSCA_dom_sf"/>
</dbReference>
<dbReference type="InterPro" id="IPR035903">
    <property type="entry name" value="HesB-like_dom_sf"/>
</dbReference>
<dbReference type="InterPro" id="IPR001075">
    <property type="entry name" value="NIF_FeS_clus_asmbl_NifU_C"/>
</dbReference>
<dbReference type="NCBIfam" id="NF008392">
    <property type="entry name" value="PRK11190.1"/>
    <property type="match status" value="1"/>
</dbReference>
<dbReference type="NCBIfam" id="TIGR03341">
    <property type="entry name" value="YhgI_GntY"/>
    <property type="match status" value="1"/>
</dbReference>
<dbReference type="PANTHER" id="PTHR11178:SF51">
    <property type="entry name" value="FE_S BIOGENESIS PROTEIN NFUA"/>
    <property type="match status" value="1"/>
</dbReference>
<dbReference type="PANTHER" id="PTHR11178">
    <property type="entry name" value="IRON-SULFUR CLUSTER SCAFFOLD PROTEIN NFU-RELATED"/>
    <property type="match status" value="1"/>
</dbReference>
<dbReference type="Pfam" id="PF01521">
    <property type="entry name" value="Fe-S_biosyn"/>
    <property type="match status" value="1"/>
</dbReference>
<dbReference type="Pfam" id="PF01106">
    <property type="entry name" value="NifU"/>
    <property type="match status" value="1"/>
</dbReference>
<dbReference type="SUPFAM" id="SSF117916">
    <property type="entry name" value="Fe-S cluster assembly (FSCA) domain-like"/>
    <property type="match status" value="1"/>
</dbReference>
<dbReference type="SUPFAM" id="SSF89360">
    <property type="entry name" value="HesB-like domain"/>
    <property type="match status" value="1"/>
</dbReference>
<comment type="function">
    <text evidence="1">Involved in iron-sulfur cluster biogenesis. Binds a 4Fe-4S cluster, can transfer this cluster to apoproteins, and thereby intervenes in the maturation of Fe/S proteins. Could also act as a scaffold/chaperone for damaged Fe/S proteins.</text>
</comment>
<comment type="cofactor">
    <cofactor evidence="1">
        <name>[4Fe-4S] cluster</name>
        <dbReference type="ChEBI" id="CHEBI:49883"/>
    </cofactor>
    <text evidence="1">Binds 1 [4Fe-4S] cluster per subunit. The cluster is presumably bound at the interface of two monomers.</text>
</comment>
<comment type="subunit">
    <text evidence="1">Homodimer.</text>
</comment>
<comment type="similarity">
    <text evidence="1">Belongs to the NfuA family.</text>
</comment>
<accession>A5UGU4</accession>
<proteinExistence type="inferred from homology"/>
<evidence type="ECO:0000255" key="1">
    <source>
        <dbReference type="HAMAP-Rule" id="MF_01637"/>
    </source>
</evidence>
<organism>
    <name type="scientific">Haemophilus influenzae (strain PittGG)</name>
    <dbReference type="NCBI Taxonomy" id="374931"/>
    <lineage>
        <taxon>Bacteria</taxon>
        <taxon>Pseudomonadati</taxon>
        <taxon>Pseudomonadota</taxon>
        <taxon>Gammaproteobacteria</taxon>
        <taxon>Pasteurellales</taxon>
        <taxon>Pasteurellaceae</taxon>
        <taxon>Haemophilus</taxon>
    </lineage>
</organism>
<protein>
    <recommendedName>
        <fullName evidence="1">Fe/S biogenesis protein NfuA</fullName>
    </recommendedName>
</protein>
<sequence>MEQATQQIAISDAAQAHFRKLLDTQEEGTNIRIFVVNPGTPNAECGVSYCPPNAVEESDIEMKYNTFSAFIDEVSLPFLEEAEIDYVTEELGAQLTLKAPNAKMRKVADDAPLIERVEYVIQTQINPQLANHGGRITLIEITEDGYAVLQFGGGCNGCSMVDVTLKDGVEKQLVSLFPNELKGAKDITEHQRGEHSYY</sequence>